<feature type="chain" id="PRO_0000318635" description="Selenoprotein W">
    <location>
        <begin position="1"/>
        <end position="86"/>
    </location>
</feature>
<feature type="non-standard amino acid" description="Selenocysteine">
    <location>
        <position position="13"/>
    </location>
</feature>
<feature type="cross-link" description="Cysteinyl-selenocysteine (Cys-Sec); redox-active" evidence="1">
    <location>
        <begin position="10"/>
        <end position="13"/>
    </location>
</feature>
<keyword id="KW-0049">Antioxidant</keyword>
<keyword id="KW-0963">Cytoplasm</keyword>
<keyword id="KW-0676">Redox-active center</keyword>
<keyword id="KW-1185">Reference proteome</keyword>
<keyword id="KW-0712">Selenocysteine</keyword>
<organism>
    <name type="scientific">Danio rerio</name>
    <name type="common">Zebrafish</name>
    <name type="synonym">Brachydanio rerio</name>
    <dbReference type="NCBI Taxonomy" id="7955"/>
    <lineage>
        <taxon>Eukaryota</taxon>
        <taxon>Metazoa</taxon>
        <taxon>Chordata</taxon>
        <taxon>Craniata</taxon>
        <taxon>Vertebrata</taxon>
        <taxon>Euteleostomi</taxon>
        <taxon>Actinopterygii</taxon>
        <taxon>Neopterygii</taxon>
        <taxon>Teleostei</taxon>
        <taxon>Ostariophysi</taxon>
        <taxon>Cypriniformes</taxon>
        <taxon>Danionidae</taxon>
        <taxon>Danioninae</taxon>
        <taxon>Danio</taxon>
    </lineage>
</organism>
<comment type="function">
    <text evidence="1">Plays a role as a glutathione (GSH)-dependent antioxidant. May be involved in a redox-related process. May play a role in the myopathies of selenium deficiency (By similarity).</text>
</comment>
<comment type="subcellular location">
    <subcellularLocation>
        <location evidence="1">Cytoplasm</location>
    </subcellularLocation>
</comment>
<comment type="similarity">
    <text evidence="3">Belongs to the SelWTH family. Selenoprotein W subfamily.</text>
</comment>
<proteinExistence type="inferred from homology"/>
<evidence type="ECO:0000250" key="1"/>
<evidence type="ECO:0000250" key="2">
    <source>
        <dbReference type="UniProtKB" id="P63302"/>
    </source>
</evidence>
<evidence type="ECO:0000305" key="3"/>
<accession>Q568W0</accession>
<gene>
    <name evidence="2" type="primary">selenow</name>
    <name type="synonym">sepw1</name>
</gene>
<sequence>MTVKVHVVYCGGUGYRPKFIKLKTLLEDEFPNELEITGEGTPSTTGWLEVEVNGKLVHSKKNGDGFVDSDSKMQKIMTAIEQAMGK</sequence>
<reference key="1">
    <citation type="submission" date="2005-04" db="EMBL/GenBank/DDBJ databases">
        <authorList>
            <consortium name="NIH - Zebrafish Gene Collection (ZGC) project"/>
        </authorList>
    </citation>
    <scope>NUCLEOTIDE SEQUENCE [LARGE SCALE MRNA]</scope>
    <source>
        <tissue>Brain</tissue>
    </source>
</reference>
<protein>
    <recommendedName>
        <fullName evidence="2">Selenoprotein W</fullName>
        <shortName evidence="2">SelW</shortName>
    </recommendedName>
</protein>
<dbReference type="EMBL" id="BC092686">
    <property type="protein sequence ID" value="AAH92686.2"/>
    <property type="molecule type" value="mRNA"/>
</dbReference>
<dbReference type="FunCoup" id="Q568W0">
    <property type="interactions" value="3"/>
</dbReference>
<dbReference type="STRING" id="7955.ENSDARP00000117583"/>
<dbReference type="PaxDb" id="7955-ENSDARP00000117583"/>
<dbReference type="AGR" id="ZFIN:ZDB-GENE-030410-5"/>
<dbReference type="ZFIN" id="ZDB-GENE-030410-5">
    <property type="gene designation" value="selenow1"/>
</dbReference>
<dbReference type="eggNOG" id="ENOG502S9W8">
    <property type="taxonomic scope" value="Eukaryota"/>
</dbReference>
<dbReference type="InParanoid" id="Q568W0"/>
<dbReference type="PRO" id="PR:Q568W0"/>
<dbReference type="Proteomes" id="UP000000437">
    <property type="component" value="Unplaced"/>
</dbReference>
<dbReference type="GO" id="GO:0005829">
    <property type="term" value="C:cytosol"/>
    <property type="evidence" value="ECO:0000318"/>
    <property type="project" value="GO_Central"/>
</dbReference>
<dbReference type="GO" id="GO:0016209">
    <property type="term" value="F:antioxidant activity"/>
    <property type="evidence" value="ECO:0007669"/>
    <property type="project" value="UniProtKB-KW"/>
</dbReference>
<dbReference type="GO" id="GO:0010269">
    <property type="term" value="P:response to selenium ion"/>
    <property type="evidence" value="ECO:0000318"/>
    <property type="project" value="GO_Central"/>
</dbReference>
<dbReference type="FunFam" id="3.40.30.10:FF:000158">
    <property type="entry name" value="Selenoprotein W"/>
    <property type="match status" value="1"/>
</dbReference>
<dbReference type="Gene3D" id="3.40.30.10">
    <property type="entry name" value="Glutaredoxin"/>
    <property type="match status" value="1"/>
</dbReference>
<dbReference type="InterPro" id="IPR011893">
    <property type="entry name" value="Selenoprotein_Rdx-typ"/>
</dbReference>
<dbReference type="InterPro" id="IPR051441">
    <property type="entry name" value="SelW_related"/>
</dbReference>
<dbReference type="InterPro" id="IPR036249">
    <property type="entry name" value="Thioredoxin-like_sf"/>
</dbReference>
<dbReference type="NCBIfam" id="TIGR02174">
    <property type="entry name" value="CXXU_selWTH"/>
    <property type="match status" value="1"/>
</dbReference>
<dbReference type="PANTHER" id="PTHR15124">
    <property type="entry name" value="SELENOPROTEIN W"/>
    <property type="match status" value="1"/>
</dbReference>
<dbReference type="PANTHER" id="PTHR15124:SF18">
    <property type="entry name" value="SELENOPROTEIN W"/>
    <property type="match status" value="1"/>
</dbReference>
<dbReference type="Pfam" id="PF10262">
    <property type="entry name" value="Rdx"/>
    <property type="match status" value="1"/>
</dbReference>
<dbReference type="SUPFAM" id="SSF52833">
    <property type="entry name" value="Thioredoxin-like"/>
    <property type="match status" value="1"/>
</dbReference>
<name>SELW_DANRE</name>